<comment type="catalytic activity">
    <reaction evidence="1">
        <text>tRNA(Leu) + L-leucine + ATP = L-leucyl-tRNA(Leu) + AMP + diphosphate</text>
        <dbReference type="Rhea" id="RHEA:11688"/>
        <dbReference type="Rhea" id="RHEA-COMP:9613"/>
        <dbReference type="Rhea" id="RHEA-COMP:9622"/>
        <dbReference type="ChEBI" id="CHEBI:30616"/>
        <dbReference type="ChEBI" id="CHEBI:33019"/>
        <dbReference type="ChEBI" id="CHEBI:57427"/>
        <dbReference type="ChEBI" id="CHEBI:78442"/>
        <dbReference type="ChEBI" id="CHEBI:78494"/>
        <dbReference type="ChEBI" id="CHEBI:456215"/>
        <dbReference type="EC" id="6.1.1.4"/>
    </reaction>
</comment>
<comment type="subcellular location">
    <subcellularLocation>
        <location evidence="1">Cytoplasm</location>
    </subcellularLocation>
</comment>
<comment type="similarity">
    <text evidence="1">Belongs to the class-I aminoacyl-tRNA synthetase family.</text>
</comment>
<sequence length="860" mass="97263">MQEQYRPEEIESKVQLHWDEKRTFEVTEDESKEKYYCLSMLPYPSGRLHMGHVRNYTIGDVIARYQRMLGKNVLQPIGWDAFGLPAEGAAVKNNTAPAPWTYDNIAYMKNQLKMLGFGYDWSRELATCTPEYYRWEQKFFTELYKKGLVYKKTSAVNWCPNDQTVLANEQVIDGCCWRCDTKVERKEIPQWFIKITAYADELLNDLDKLDHWPDTVKTMQRNWIGRSEGVEITFNVNNYDNTLTVYTTRPDTFMGCTYLAVAAGHPLAQKAAENNPELAAFIDECRNTKVAEAEMATMEKKGVDTGFKAVHPLTGEEIPVWAANFVLMEYGTGAVMAVPGHDQRDYEFASKYGLNIKPVILAADGSEPDLSQQALTEKGVLFNSGEFNGLDHEAAFNAIADKLTAMGVGERKVNYRLRDWGVSRQRYWGAPIPMVTLEDGTVMPTPDDQLPVILPEDVVMDGITSPIKADPEWAKTTVNGMPALRETDTFDTFMESSWYYARYTCPQYKEGMLDSKAANYWLPVDIYIGGIEHAIMHLLYFRFFHKLMRDAGMVNSDEPAKQLLCQGMVLADAFYYVGENGERNWVSPVDAIVERDEKGRIVKAKDAAGHELVYTGMSKMSKSKNNGIDPQVMVERYGADTVRLFMMFASPADMTLEWQESGVEGANRFLKRVWKLVYEHTAKGDVATLNVDALTEDQKALRRDVHKTIAKVTDDIGRRQTFNTAIAAIMELMNKLAKAPTDGEQDRALMQEALLAVVRMLNPFTPHICFTLWQELKGEGDIDNAPWPVADEKAMVEDSTLVVVQVNGKVRAKITVPVDATEEQVRERAGQEHLVAKYLDGVTVRKVIYVPGKLLNLVVG</sequence>
<feature type="chain" id="PRO_1000057343" description="Leucine--tRNA ligase">
    <location>
        <begin position="1"/>
        <end position="860"/>
    </location>
</feature>
<feature type="short sequence motif" description="'HIGH' region">
    <location>
        <begin position="42"/>
        <end position="52"/>
    </location>
</feature>
<feature type="short sequence motif" description="'KMSKS' region">
    <location>
        <begin position="619"/>
        <end position="623"/>
    </location>
</feature>
<feature type="binding site" evidence="1">
    <location>
        <position position="622"/>
    </location>
    <ligand>
        <name>ATP</name>
        <dbReference type="ChEBI" id="CHEBI:30616"/>
    </ligand>
</feature>
<keyword id="KW-0030">Aminoacyl-tRNA synthetase</keyword>
<keyword id="KW-0067">ATP-binding</keyword>
<keyword id="KW-0963">Cytoplasm</keyword>
<keyword id="KW-0436">Ligase</keyword>
<keyword id="KW-0547">Nucleotide-binding</keyword>
<keyword id="KW-0648">Protein biosynthesis</keyword>
<organism>
    <name type="scientific">Escherichia coli O9:H4 (strain HS)</name>
    <dbReference type="NCBI Taxonomy" id="331112"/>
    <lineage>
        <taxon>Bacteria</taxon>
        <taxon>Pseudomonadati</taxon>
        <taxon>Pseudomonadota</taxon>
        <taxon>Gammaproteobacteria</taxon>
        <taxon>Enterobacterales</taxon>
        <taxon>Enterobacteriaceae</taxon>
        <taxon>Escherichia</taxon>
    </lineage>
</organism>
<reference key="1">
    <citation type="journal article" date="2008" name="J. Bacteriol.">
        <title>The pangenome structure of Escherichia coli: comparative genomic analysis of E. coli commensal and pathogenic isolates.</title>
        <authorList>
            <person name="Rasko D.A."/>
            <person name="Rosovitz M.J."/>
            <person name="Myers G.S.A."/>
            <person name="Mongodin E.F."/>
            <person name="Fricke W.F."/>
            <person name="Gajer P."/>
            <person name="Crabtree J."/>
            <person name="Sebaihia M."/>
            <person name="Thomson N.R."/>
            <person name="Chaudhuri R."/>
            <person name="Henderson I.R."/>
            <person name="Sperandio V."/>
            <person name="Ravel J."/>
        </authorList>
    </citation>
    <scope>NUCLEOTIDE SEQUENCE [LARGE SCALE GENOMIC DNA]</scope>
    <source>
        <strain>HS</strain>
    </source>
</reference>
<proteinExistence type="inferred from homology"/>
<protein>
    <recommendedName>
        <fullName evidence="1">Leucine--tRNA ligase</fullName>
        <ecNumber evidence="1">6.1.1.4</ecNumber>
    </recommendedName>
    <alternativeName>
        <fullName evidence="1">Leucyl-tRNA synthetase</fullName>
        <shortName evidence="1">LeuRS</shortName>
    </alternativeName>
</protein>
<evidence type="ECO:0000255" key="1">
    <source>
        <dbReference type="HAMAP-Rule" id="MF_00049"/>
    </source>
</evidence>
<gene>
    <name evidence="1" type="primary">leuS</name>
    <name type="ordered locus">EcHS_A0694</name>
</gene>
<name>SYL_ECOHS</name>
<dbReference type="EC" id="6.1.1.4" evidence="1"/>
<dbReference type="EMBL" id="CP000802">
    <property type="protein sequence ID" value="ABV05072.1"/>
    <property type="molecule type" value="Genomic_DNA"/>
</dbReference>
<dbReference type="RefSeq" id="WP_001338359.1">
    <property type="nucleotide sequence ID" value="NC_009800.1"/>
</dbReference>
<dbReference type="SMR" id="A7ZXR8"/>
<dbReference type="KEGG" id="ecx:EcHS_A0694"/>
<dbReference type="HOGENOM" id="CLU_004427_0_0_6"/>
<dbReference type="GO" id="GO:0005829">
    <property type="term" value="C:cytosol"/>
    <property type="evidence" value="ECO:0007669"/>
    <property type="project" value="TreeGrafter"/>
</dbReference>
<dbReference type="GO" id="GO:0002161">
    <property type="term" value="F:aminoacyl-tRNA deacylase activity"/>
    <property type="evidence" value="ECO:0007669"/>
    <property type="project" value="InterPro"/>
</dbReference>
<dbReference type="GO" id="GO:0005524">
    <property type="term" value="F:ATP binding"/>
    <property type="evidence" value="ECO:0007669"/>
    <property type="project" value="UniProtKB-UniRule"/>
</dbReference>
<dbReference type="GO" id="GO:0004823">
    <property type="term" value="F:leucine-tRNA ligase activity"/>
    <property type="evidence" value="ECO:0007669"/>
    <property type="project" value="UniProtKB-UniRule"/>
</dbReference>
<dbReference type="GO" id="GO:0006429">
    <property type="term" value="P:leucyl-tRNA aminoacylation"/>
    <property type="evidence" value="ECO:0007669"/>
    <property type="project" value="UniProtKB-UniRule"/>
</dbReference>
<dbReference type="CDD" id="cd07958">
    <property type="entry name" value="Anticodon_Ia_Leu_BEm"/>
    <property type="match status" value="1"/>
</dbReference>
<dbReference type="CDD" id="cd00812">
    <property type="entry name" value="LeuRS_core"/>
    <property type="match status" value="1"/>
</dbReference>
<dbReference type="FunFam" id="1.10.730.10:FF:000002">
    <property type="entry name" value="Leucine--tRNA ligase"/>
    <property type="match status" value="2"/>
</dbReference>
<dbReference type="FunFam" id="2.20.28.290:FF:000001">
    <property type="entry name" value="Leucine--tRNA ligase"/>
    <property type="match status" value="1"/>
</dbReference>
<dbReference type="FunFam" id="3.10.20.590:FF:000001">
    <property type="entry name" value="Leucine--tRNA ligase"/>
    <property type="match status" value="1"/>
</dbReference>
<dbReference type="FunFam" id="3.40.50.620:FF:000003">
    <property type="entry name" value="Leucine--tRNA ligase"/>
    <property type="match status" value="1"/>
</dbReference>
<dbReference type="FunFam" id="3.40.50.620:FF:000124">
    <property type="entry name" value="Leucine--tRNA ligase"/>
    <property type="match status" value="1"/>
</dbReference>
<dbReference type="FunFam" id="3.90.740.10:FF:000012">
    <property type="entry name" value="Leucine--tRNA ligase"/>
    <property type="match status" value="1"/>
</dbReference>
<dbReference type="Gene3D" id="2.20.28.290">
    <property type="match status" value="1"/>
</dbReference>
<dbReference type="Gene3D" id="3.10.20.590">
    <property type="match status" value="1"/>
</dbReference>
<dbReference type="Gene3D" id="3.40.50.620">
    <property type="entry name" value="HUPs"/>
    <property type="match status" value="2"/>
</dbReference>
<dbReference type="Gene3D" id="1.10.730.10">
    <property type="entry name" value="Isoleucyl-tRNA Synthetase, Domain 1"/>
    <property type="match status" value="2"/>
</dbReference>
<dbReference type="HAMAP" id="MF_00049_B">
    <property type="entry name" value="Leu_tRNA_synth_B"/>
    <property type="match status" value="1"/>
</dbReference>
<dbReference type="InterPro" id="IPR001412">
    <property type="entry name" value="aa-tRNA-synth_I_CS"/>
</dbReference>
<dbReference type="InterPro" id="IPR002300">
    <property type="entry name" value="aa-tRNA-synth_Ia"/>
</dbReference>
<dbReference type="InterPro" id="IPR002302">
    <property type="entry name" value="Leu-tRNA-ligase"/>
</dbReference>
<dbReference type="InterPro" id="IPR025709">
    <property type="entry name" value="Leu_tRNA-synth_edit"/>
</dbReference>
<dbReference type="InterPro" id="IPR013155">
    <property type="entry name" value="M/V/L/I-tRNA-synth_anticd-bd"/>
</dbReference>
<dbReference type="InterPro" id="IPR015413">
    <property type="entry name" value="Methionyl/Leucyl_tRNA_Synth"/>
</dbReference>
<dbReference type="InterPro" id="IPR014729">
    <property type="entry name" value="Rossmann-like_a/b/a_fold"/>
</dbReference>
<dbReference type="InterPro" id="IPR009080">
    <property type="entry name" value="tRNAsynth_Ia_anticodon-bd"/>
</dbReference>
<dbReference type="InterPro" id="IPR009008">
    <property type="entry name" value="Val/Leu/Ile-tRNA-synth_edit"/>
</dbReference>
<dbReference type="NCBIfam" id="TIGR00396">
    <property type="entry name" value="leuS_bact"/>
    <property type="match status" value="1"/>
</dbReference>
<dbReference type="PANTHER" id="PTHR43740:SF2">
    <property type="entry name" value="LEUCINE--TRNA LIGASE, MITOCHONDRIAL"/>
    <property type="match status" value="1"/>
</dbReference>
<dbReference type="PANTHER" id="PTHR43740">
    <property type="entry name" value="LEUCYL-TRNA SYNTHETASE"/>
    <property type="match status" value="1"/>
</dbReference>
<dbReference type="Pfam" id="PF08264">
    <property type="entry name" value="Anticodon_1"/>
    <property type="match status" value="1"/>
</dbReference>
<dbReference type="Pfam" id="PF00133">
    <property type="entry name" value="tRNA-synt_1"/>
    <property type="match status" value="2"/>
</dbReference>
<dbReference type="Pfam" id="PF13603">
    <property type="entry name" value="tRNA-synt_1_2"/>
    <property type="match status" value="1"/>
</dbReference>
<dbReference type="Pfam" id="PF09334">
    <property type="entry name" value="tRNA-synt_1g"/>
    <property type="match status" value="1"/>
</dbReference>
<dbReference type="PRINTS" id="PR00985">
    <property type="entry name" value="TRNASYNTHLEU"/>
</dbReference>
<dbReference type="SUPFAM" id="SSF47323">
    <property type="entry name" value="Anticodon-binding domain of a subclass of class I aminoacyl-tRNA synthetases"/>
    <property type="match status" value="1"/>
</dbReference>
<dbReference type="SUPFAM" id="SSF52374">
    <property type="entry name" value="Nucleotidylyl transferase"/>
    <property type="match status" value="1"/>
</dbReference>
<dbReference type="SUPFAM" id="SSF50677">
    <property type="entry name" value="ValRS/IleRS/LeuRS editing domain"/>
    <property type="match status" value="1"/>
</dbReference>
<dbReference type="PROSITE" id="PS00178">
    <property type="entry name" value="AA_TRNA_LIGASE_I"/>
    <property type="match status" value="1"/>
</dbReference>
<accession>A7ZXR8</accession>